<dbReference type="EMBL" id="CP000089">
    <property type="protein sequence ID" value="AAZ47078.1"/>
    <property type="molecule type" value="Genomic_DNA"/>
</dbReference>
<dbReference type="SMR" id="Q47DK3"/>
<dbReference type="STRING" id="159087.Daro_2342"/>
<dbReference type="KEGG" id="dar:Daro_2342"/>
<dbReference type="eggNOG" id="COG0691">
    <property type="taxonomic scope" value="Bacteria"/>
</dbReference>
<dbReference type="HOGENOM" id="CLU_108953_3_0_4"/>
<dbReference type="OrthoDB" id="9805462at2"/>
<dbReference type="GO" id="GO:0005829">
    <property type="term" value="C:cytosol"/>
    <property type="evidence" value="ECO:0007669"/>
    <property type="project" value="TreeGrafter"/>
</dbReference>
<dbReference type="GO" id="GO:0003723">
    <property type="term" value="F:RNA binding"/>
    <property type="evidence" value="ECO:0007669"/>
    <property type="project" value="UniProtKB-UniRule"/>
</dbReference>
<dbReference type="GO" id="GO:0070929">
    <property type="term" value="P:trans-translation"/>
    <property type="evidence" value="ECO:0007669"/>
    <property type="project" value="UniProtKB-UniRule"/>
</dbReference>
<dbReference type="CDD" id="cd09294">
    <property type="entry name" value="SmpB"/>
    <property type="match status" value="1"/>
</dbReference>
<dbReference type="Gene3D" id="2.40.280.10">
    <property type="match status" value="1"/>
</dbReference>
<dbReference type="HAMAP" id="MF_00023">
    <property type="entry name" value="SmpB"/>
    <property type="match status" value="1"/>
</dbReference>
<dbReference type="InterPro" id="IPR023620">
    <property type="entry name" value="SmpB"/>
</dbReference>
<dbReference type="InterPro" id="IPR000037">
    <property type="entry name" value="SsrA-bd_prot"/>
</dbReference>
<dbReference type="InterPro" id="IPR020081">
    <property type="entry name" value="SsrA-bd_prot_CS"/>
</dbReference>
<dbReference type="NCBIfam" id="NF003843">
    <property type="entry name" value="PRK05422.1"/>
    <property type="match status" value="1"/>
</dbReference>
<dbReference type="NCBIfam" id="TIGR00086">
    <property type="entry name" value="smpB"/>
    <property type="match status" value="1"/>
</dbReference>
<dbReference type="PANTHER" id="PTHR30308:SF2">
    <property type="entry name" value="SSRA-BINDING PROTEIN"/>
    <property type="match status" value="1"/>
</dbReference>
<dbReference type="PANTHER" id="PTHR30308">
    <property type="entry name" value="TMRNA-BINDING COMPONENT OF TRANS-TRANSLATION TAGGING COMPLEX"/>
    <property type="match status" value="1"/>
</dbReference>
<dbReference type="Pfam" id="PF01668">
    <property type="entry name" value="SmpB"/>
    <property type="match status" value="1"/>
</dbReference>
<dbReference type="SUPFAM" id="SSF74982">
    <property type="entry name" value="Small protein B (SmpB)"/>
    <property type="match status" value="1"/>
</dbReference>
<dbReference type="PROSITE" id="PS01317">
    <property type="entry name" value="SSRP"/>
    <property type="match status" value="1"/>
</dbReference>
<protein>
    <recommendedName>
        <fullName evidence="1">SsrA-binding protein</fullName>
    </recommendedName>
    <alternativeName>
        <fullName evidence="1">Small protein B</fullName>
    </alternativeName>
</protein>
<comment type="function">
    <text evidence="1">Required for rescue of stalled ribosomes mediated by trans-translation. Binds to transfer-messenger RNA (tmRNA), required for stable association of tmRNA with ribosomes. tmRNA and SmpB together mimic tRNA shape, replacing the anticodon stem-loop with SmpB. tmRNA is encoded by the ssrA gene; the 2 termini fold to resemble tRNA(Ala) and it encodes a 'tag peptide', a short internal open reading frame. During trans-translation Ala-aminoacylated tmRNA acts like a tRNA, entering the A-site of stalled ribosomes, displacing the stalled mRNA. The ribosome then switches to translate the ORF on the tmRNA; the nascent peptide is terminated with the 'tag peptide' encoded by the tmRNA and targeted for degradation. The ribosome is freed to recommence translation, which seems to be the essential function of trans-translation.</text>
</comment>
<comment type="subcellular location">
    <subcellularLocation>
        <location evidence="1">Cytoplasm</location>
    </subcellularLocation>
    <text evidence="1">The tmRNA-SmpB complex associates with stalled 70S ribosomes.</text>
</comment>
<comment type="similarity">
    <text evidence="1">Belongs to the SmpB family.</text>
</comment>
<name>SSRP_DECAR</name>
<reference key="1">
    <citation type="journal article" date="2009" name="BMC Genomics">
        <title>Metabolic analysis of the soil microbe Dechloromonas aromatica str. RCB: indications of a surprisingly complex life-style and cryptic anaerobic pathways for aromatic degradation.</title>
        <authorList>
            <person name="Salinero K.K."/>
            <person name="Keller K."/>
            <person name="Feil W.S."/>
            <person name="Feil H."/>
            <person name="Trong S."/>
            <person name="Di Bartolo G."/>
            <person name="Lapidus A."/>
        </authorList>
    </citation>
    <scope>NUCLEOTIDE SEQUENCE [LARGE SCALE GENOMIC DNA]</scope>
    <source>
        <strain>RCB</strain>
    </source>
</reference>
<organism>
    <name type="scientific">Dechloromonas aromatica (strain RCB)</name>
    <dbReference type="NCBI Taxonomy" id="159087"/>
    <lineage>
        <taxon>Bacteria</taxon>
        <taxon>Pseudomonadati</taxon>
        <taxon>Pseudomonadota</taxon>
        <taxon>Betaproteobacteria</taxon>
        <taxon>Rhodocyclales</taxon>
        <taxon>Azonexaceae</taxon>
        <taxon>Dechloromonas</taxon>
    </lineage>
</organism>
<gene>
    <name evidence="1" type="primary">smpB</name>
    <name type="ordered locus">Daro_2342</name>
</gene>
<accession>Q47DK3</accession>
<proteinExistence type="inferred from homology"/>
<feature type="chain" id="PRO_1000002042" description="SsrA-binding protein">
    <location>
        <begin position="1"/>
        <end position="149"/>
    </location>
</feature>
<feature type="region of interest" description="Disordered" evidence="2">
    <location>
        <begin position="121"/>
        <end position="149"/>
    </location>
</feature>
<feature type="compositionally biased region" description="Basic and acidic residues" evidence="2">
    <location>
        <begin position="127"/>
        <end position="149"/>
    </location>
</feature>
<evidence type="ECO:0000255" key="1">
    <source>
        <dbReference type="HAMAP-Rule" id="MF_00023"/>
    </source>
</evidence>
<evidence type="ECO:0000256" key="2">
    <source>
        <dbReference type="SAM" id="MobiDB-lite"/>
    </source>
</evidence>
<keyword id="KW-0963">Cytoplasm</keyword>
<keyword id="KW-0694">RNA-binding</keyword>
<sequence>MSITVNKKAFHDYFVEEKYEAGISLEGWEVKAIRAGRMNIKESYVIIKGGELFLIGMHISPLATASTHVSHDPTRTRKLLLHAKEISKLIGKVERAGYALVPLDLHFVRGRIKLEIGLAKGKKQHDKRADELDKDSKREAQRAMKERQR</sequence>